<protein>
    <recommendedName>
        <fullName evidence="1">Small ribosomal subunit protein uS9</fullName>
    </recommendedName>
    <alternativeName>
        <fullName evidence="3">30S ribosomal protein S9</fullName>
    </alternativeName>
</protein>
<keyword id="KW-0687">Ribonucleoprotein</keyword>
<keyword id="KW-0689">Ribosomal protein</keyword>
<evidence type="ECO:0000255" key="1">
    <source>
        <dbReference type="HAMAP-Rule" id="MF_00532"/>
    </source>
</evidence>
<evidence type="ECO:0000256" key="2">
    <source>
        <dbReference type="SAM" id="MobiDB-lite"/>
    </source>
</evidence>
<evidence type="ECO:0000305" key="3"/>
<gene>
    <name evidence="1" type="primary">rpsI</name>
    <name type="ordered locus">Bsph_4582</name>
</gene>
<name>RS9_LYSSC</name>
<accession>B1HMU8</accession>
<feature type="chain" id="PRO_1000128136" description="Small ribosomal subunit protein uS9">
    <location>
        <begin position="1"/>
        <end position="130"/>
    </location>
</feature>
<feature type="region of interest" description="Disordered" evidence="2">
    <location>
        <begin position="105"/>
        <end position="130"/>
    </location>
</feature>
<feature type="compositionally biased region" description="Basic residues" evidence="2">
    <location>
        <begin position="111"/>
        <end position="130"/>
    </location>
</feature>
<sequence>MAQVQYIGTGRRKSSVARVRLVPGTGKIVINKREIEEYVPFAALREVIKQPLVATETTGSYDIHVNVNGGGYTGQAGAVRHGIARALLQVDPDFRAALKSAGLLTRDSRMKERKKPGLRGARRAPQFSKR</sequence>
<comment type="similarity">
    <text evidence="1">Belongs to the universal ribosomal protein uS9 family.</text>
</comment>
<proteinExistence type="inferred from homology"/>
<reference key="1">
    <citation type="journal article" date="2008" name="J. Bacteriol.">
        <title>Complete genome sequence of the mosquitocidal bacterium Bacillus sphaericus C3-41 and comparison with those of closely related Bacillus species.</title>
        <authorList>
            <person name="Hu X."/>
            <person name="Fan W."/>
            <person name="Han B."/>
            <person name="Liu H."/>
            <person name="Zheng D."/>
            <person name="Li Q."/>
            <person name="Dong W."/>
            <person name="Yan J."/>
            <person name="Gao M."/>
            <person name="Berry C."/>
            <person name="Yuan Z."/>
        </authorList>
    </citation>
    <scope>NUCLEOTIDE SEQUENCE [LARGE SCALE GENOMIC DNA]</scope>
    <source>
        <strain>C3-41</strain>
    </source>
</reference>
<organism>
    <name type="scientific">Lysinibacillus sphaericus (strain C3-41)</name>
    <dbReference type="NCBI Taxonomy" id="444177"/>
    <lineage>
        <taxon>Bacteria</taxon>
        <taxon>Bacillati</taxon>
        <taxon>Bacillota</taxon>
        <taxon>Bacilli</taxon>
        <taxon>Bacillales</taxon>
        <taxon>Bacillaceae</taxon>
        <taxon>Lysinibacillus</taxon>
    </lineage>
</organism>
<dbReference type="EMBL" id="CP000817">
    <property type="protein sequence ID" value="ACA42026.1"/>
    <property type="molecule type" value="Genomic_DNA"/>
</dbReference>
<dbReference type="RefSeq" id="WP_004233744.1">
    <property type="nucleotide sequence ID" value="NC_010382.1"/>
</dbReference>
<dbReference type="SMR" id="B1HMU8"/>
<dbReference type="EnsemblBacteria" id="ACA42026">
    <property type="protein sequence ID" value="ACA42026"/>
    <property type="gene ID" value="Bsph_4582"/>
</dbReference>
<dbReference type="GeneID" id="96596922"/>
<dbReference type="KEGG" id="lsp:Bsph_4582"/>
<dbReference type="HOGENOM" id="CLU_046483_2_1_9"/>
<dbReference type="Proteomes" id="UP000002164">
    <property type="component" value="Chromosome"/>
</dbReference>
<dbReference type="GO" id="GO:0022627">
    <property type="term" value="C:cytosolic small ribosomal subunit"/>
    <property type="evidence" value="ECO:0007669"/>
    <property type="project" value="TreeGrafter"/>
</dbReference>
<dbReference type="GO" id="GO:0003723">
    <property type="term" value="F:RNA binding"/>
    <property type="evidence" value="ECO:0007669"/>
    <property type="project" value="TreeGrafter"/>
</dbReference>
<dbReference type="GO" id="GO:0003735">
    <property type="term" value="F:structural constituent of ribosome"/>
    <property type="evidence" value="ECO:0007669"/>
    <property type="project" value="InterPro"/>
</dbReference>
<dbReference type="GO" id="GO:0006412">
    <property type="term" value="P:translation"/>
    <property type="evidence" value="ECO:0007669"/>
    <property type="project" value="UniProtKB-UniRule"/>
</dbReference>
<dbReference type="FunFam" id="3.30.230.10:FF:000001">
    <property type="entry name" value="30S ribosomal protein S9"/>
    <property type="match status" value="1"/>
</dbReference>
<dbReference type="Gene3D" id="3.30.230.10">
    <property type="match status" value="1"/>
</dbReference>
<dbReference type="HAMAP" id="MF_00532_B">
    <property type="entry name" value="Ribosomal_uS9_B"/>
    <property type="match status" value="1"/>
</dbReference>
<dbReference type="InterPro" id="IPR020568">
    <property type="entry name" value="Ribosomal_Su5_D2-typ_SF"/>
</dbReference>
<dbReference type="InterPro" id="IPR000754">
    <property type="entry name" value="Ribosomal_uS9"/>
</dbReference>
<dbReference type="InterPro" id="IPR023035">
    <property type="entry name" value="Ribosomal_uS9_bac/plastid"/>
</dbReference>
<dbReference type="InterPro" id="IPR020574">
    <property type="entry name" value="Ribosomal_uS9_CS"/>
</dbReference>
<dbReference type="InterPro" id="IPR014721">
    <property type="entry name" value="Ribsml_uS5_D2-typ_fold_subgr"/>
</dbReference>
<dbReference type="NCBIfam" id="NF001099">
    <property type="entry name" value="PRK00132.1"/>
    <property type="match status" value="1"/>
</dbReference>
<dbReference type="PANTHER" id="PTHR21569">
    <property type="entry name" value="RIBOSOMAL PROTEIN S9"/>
    <property type="match status" value="1"/>
</dbReference>
<dbReference type="PANTHER" id="PTHR21569:SF1">
    <property type="entry name" value="SMALL RIBOSOMAL SUBUNIT PROTEIN US9M"/>
    <property type="match status" value="1"/>
</dbReference>
<dbReference type="Pfam" id="PF00380">
    <property type="entry name" value="Ribosomal_S9"/>
    <property type="match status" value="1"/>
</dbReference>
<dbReference type="SUPFAM" id="SSF54211">
    <property type="entry name" value="Ribosomal protein S5 domain 2-like"/>
    <property type="match status" value="1"/>
</dbReference>
<dbReference type="PROSITE" id="PS00360">
    <property type="entry name" value="RIBOSOMAL_S9"/>
    <property type="match status" value="1"/>
</dbReference>